<reference key="1">
    <citation type="journal article" date="2004" name="Nucleic Acids Res.">
        <title>Unique features revealed by the genome sequence of Acinetobacter sp. ADP1, a versatile and naturally transformation competent bacterium.</title>
        <authorList>
            <person name="Barbe V."/>
            <person name="Vallenet D."/>
            <person name="Fonknechten N."/>
            <person name="Kreimeyer A."/>
            <person name="Oztas S."/>
            <person name="Labarre L."/>
            <person name="Cruveiller S."/>
            <person name="Robert C."/>
            <person name="Duprat S."/>
            <person name="Wincker P."/>
            <person name="Ornston L.N."/>
            <person name="Weissenbach J."/>
            <person name="Marliere P."/>
            <person name="Cohen G.N."/>
            <person name="Medigue C."/>
        </authorList>
    </citation>
    <scope>NUCLEOTIDE SEQUENCE [LARGE SCALE GENOMIC DNA]</scope>
    <source>
        <strain>ATCC 33305 / BD413 / ADP1</strain>
    </source>
</reference>
<sequence>MIFIMTDAHAQSAQNIATTYDPTDIERKWYQIWEEKGYFKPSGQGDSFCIMIPPPNVTGSLHMGHGFNNAIMDALTRYNRMMGKNTLWQPGTDHAGIATQMVVERQLAAQNISRHDLGREQFIDKVWEWKEQSGGTITKQIRRLGSSVDWSRERFTMDDGLSNAVKEVFVKLHEDGLIYRGKRLVNWDPKLQTALSDLEVESVEEKGSLWHFKYFFEDKSLKTQDGHDFLVVATTRPETLLGDTAVAVHPEDERYAHLIGKNIVLPITGRLVPIVADEYVEKDFGTGCVKITPAHDFNDYDLGKRHDLPIINIFNKNAEVLAEFEYIAKAGEQISDAIAAPADYVGLERFAARKKLVAQAEAEGWLDQIQPYDLKAPRGDRSGVIVEPLLTDQWYVKIAPLAQPAIEAVQDGRIKFVPEQYTNMYMAWMNNIQDWCISRQLWWGHRIPAWYDAEGNVYVGRNEEEVRAKNNLAADLALQQDEDVLDTWFSSGLWTFSTLGWTGDAKKDAENYFLNTFHPTDVLVTGFDIIFFWVARMIMMTMHFMKNEDGTPQVPFKTVYVHGLVRDGEGQKMSKSKGNVLDPLDLIDGIDLESLVQKRTFGLMNPKQAEKIEKATRKEFPEGINSYGTDAVRFTFCALANTGRDIKFDLKRVEGYRNFCNKIWNATRFVLMNVEGQTVAQEARPELWELPEQWIMSRLQKAEQAVHQAFATYRLDLAAQTIYDFIWNEYCDWYVELTKPVLNDAEVSEERKAEVRRVLLAVMEASLRLAHPLMPYLTEEIWQTLAPMIGKGGDTIMTAKYPVPEAAKMNEQAEADMQWLQGLIGAVRNIRGEMGLGNARLLPVLLQNISDSERTQIERIQPLFKALAKVESITFLAQGEEPPLSSSSVVGHASVFVPMKGLIDPKAELGRLQKDLDKVQKQHDQIASKLANEGFVAKAPAAVVEGEKVKLAEFADQLVKIKQSMEQIAAL</sequence>
<proteinExistence type="inferred from homology"/>
<protein>
    <recommendedName>
        <fullName evidence="1">Valine--tRNA ligase</fullName>
        <ecNumber evidence="1">6.1.1.9</ecNumber>
    </recommendedName>
    <alternativeName>
        <fullName evidence="1">Valyl-tRNA synthetase</fullName>
        <shortName evidence="1">ValRS</shortName>
    </alternativeName>
</protein>
<name>SYV_ACIAD</name>
<comment type="function">
    <text evidence="1">Catalyzes the attachment of valine to tRNA(Val). As ValRS can inadvertently accommodate and process structurally similar amino acids such as threonine, to avoid such errors, it has a 'posttransfer' editing activity that hydrolyzes mischarged Thr-tRNA(Val) in a tRNA-dependent manner.</text>
</comment>
<comment type="catalytic activity">
    <reaction evidence="1">
        <text>tRNA(Val) + L-valine + ATP = L-valyl-tRNA(Val) + AMP + diphosphate</text>
        <dbReference type="Rhea" id="RHEA:10704"/>
        <dbReference type="Rhea" id="RHEA-COMP:9672"/>
        <dbReference type="Rhea" id="RHEA-COMP:9708"/>
        <dbReference type="ChEBI" id="CHEBI:30616"/>
        <dbReference type="ChEBI" id="CHEBI:33019"/>
        <dbReference type="ChEBI" id="CHEBI:57762"/>
        <dbReference type="ChEBI" id="CHEBI:78442"/>
        <dbReference type="ChEBI" id="CHEBI:78537"/>
        <dbReference type="ChEBI" id="CHEBI:456215"/>
        <dbReference type="EC" id="6.1.1.9"/>
    </reaction>
</comment>
<comment type="subunit">
    <text evidence="1">Monomer.</text>
</comment>
<comment type="subcellular location">
    <subcellularLocation>
        <location evidence="1">Cytoplasm</location>
    </subcellularLocation>
</comment>
<comment type="domain">
    <text evidence="1">ValRS has two distinct active sites: one for aminoacylation and one for editing. The misactivated threonine is translocated from the active site to the editing site.</text>
</comment>
<comment type="domain">
    <text evidence="1">The C-terminal coiled-coil domain is crucial for aminoacylation activity.</text>
</comment>
<comment type="similarity">
    <text evidence="1">Belongs to the class-I aminoacyl-tRNA synthetase family. ValS type 1 subfamily.</text>
</comment>
<dbReference type="EC" id="6.1.1.9" evidence="1"/>
<dbReference type="EMBL" id="CR543861">
    <property type="protein sequence ID" value="CAG69665.1"/>
    <property type="molecule type" value="Genomic_DNA"/>
</dbReference>
<dbReference type="SMR" id="Q6F8F0"/>
<dbReference type="STRING" id="202950.GCA_001485005_02860"/>
<dbReference type="KEGG" id="aci:ACIAD2950"/>
<dbReference type="eggNOG" id="COG0525">
    <property type="taxonomic scope" value="Bacteria"/>
</dbReference>
<dbReference type="HOGENOM" id="CLU_001493_0_2_6"/>
<dbReference type="Proteomes" id="UP000000430">
    <property type="component" value="Chromosome"/>
</dbReference>
<dbReference type="GO" id="GO:0005829">
    <property type="term" value="C:cytosol"/>
    <property type="evidence" value="ECO:0007669"/>
    <property type="project" value="TreeGrafter"/>
</dbReference>
<dbReference type="GO" id="GO:0002161">
    <property type="term" value="F:aminoacyl-tRNA deacylase activity"/>
    <property type="evidence" value="ECO:0007669"/>
    <property type="project" value="InterPro"/>
</dbReference>
<dbReference type="GO" id="GO:0005524">
    <property type="term" value="F:ATP binding"/>
    <property type="evidence" value="ECO:0007669"/>
    <property type="project" value="UniProtKB-UniRule"/>
</dbReference>
<dbReference type="GO" id="GO:0004832">
    <property type="term" value="F:valine-tRNA ligase activity"/>
    <property type="evidence" value="ECO:0007669"/>
    <property type="project" value="UniProtKB-UniRule"/>
</dbReference>
<dbReference type="GO" id="GO:0006438">
    <property type="term" value="P:valyl-tRNA aminoacylation"/>
    <property type="evidence" value="ECO:0007669"/>
    <property type="project" value="UniProtKB-UniRule"/>
</dbReference>
<dbReference type="CDD" id="cd07962">
    <property type="entry name" value="Anticodon_Ia_Val"/>
    <property type="match status" value="1"/>
</dbReference>
<dbReference type="CDD" id="cd00817">
    <property type="entry name" value="ValRS_core"/>
    <property type="match status" value="1"/>
</dbReference>
<dbReference type="FunFam" id="1.10.287.380:FF:000001">
    <property type="entry name" value="Valine--tRNA ligase"/>
    <property type="match status" value="1"/>
</dbReference>
<dbReference type="FunFam" id="3.40.50.620:FF:000073">
    <property type="entry name" value="Valine--tRNA ligase"/>
    <property type="match status" value="1"/>
</dbReference>
<dbReference type="FunFam" id="3.90.740.10:FF:000003">
    <property type="entry name" value="Valine--tRNA ligase"/>
    <property type="match status" value="1"/>
</dbReference>
<dbReference type="FunFam" id="1.10.730.10:FF:000009">
    <property type="entry name" value="Valine--tRNA ligase, mitochondrial"/>
    <property type="match status" value="1"/>
</dbReference>
<dbReference type="FunFam" id="3.40.50.620:FF:000020">
    <property type="entry name" value="Valine--tRNA ligase, mitochondrial"/>
    <property type="match status" value="1"/>
</dbReference>
<dbReference type="Gene3D" id="3.40.50.620">
    <property type="entry name" value="HUPs"/>
    <property type="match status" value="2"/>
</dbReference>
<dbReference type="Gene3D" id="1.10.730.10">
    <property type="entry name" value="Isoleucyl-tRNA Synthetase, Domain 1"/>
    <property type="match status" value="1"/>
</dbReference>
<dbReference type="Gene3D" id="1.10.287.380">
    <property type="entry name" value="Valyl-tRNA synthetase, C-terminal domain"/>
    <property type="match status" value="1"/>
</dbReference>
<dbReference type="Gene3D" id="3.90.740.10">
    <property type="entry name" value="Valyl/Leucyl/Isoleucyl-tRNA synthetase, editing domain"/>
    <property type="match status" value="2"/>
</dbReference>
<dbReference type="HAMAP" id="MF_02004">
    <property type="entry name" value="Val_tRNA_synth_type1"/>
    <property type="match status" value="1"/>
</dbReference>
<dbReference type="InterPro" id="IPR001412">
    <property type="entry name" value="aa-tRNA-synth_I_CS"/>
</dbReference>
<dbReference type="InterPro" id="IPR002300">
    <property type="entry name" value="aa-tRNA-synth_Ia"/>
</dbReference>
<dbReference type="InterPro" id="IPR033705">
    <property type="entry name" value="Anticodon_Ia_Val"/>
</dbReference>
<dbReference type="InterPro" id="IPR013155">
    <property type="entry name" value="M/V/L/I-tRNA-synth_anticd-bd"/>
</dbReference>
<dbReference type="InterPro" id="IPR014729">
    <property type="entry name" value="Rossmann-like_a/b/a_fold"/>
</dbReference>
<dbReference type="InterPro" id="IPR010978">
    <property type="entry name" value="tRNA-bd_arm"/>
</dbReference>
<dbReference type="InterPro" id="IPR009080">
    <property type="entry name" value="tRNAsynth_Ia_anticodon-bd"/>
</dbReference>
<dbReference type="InterPro" id="IPR037118">
    <property type="entry name" value="Val-tRNA_synth_C_sf"/>
</dbReference>
<dbReference type="InterPro" id="IPR019499">
    <property type="entry name" value="Val-tRNA_synth_tRNA-bd"/>
</dbReference>
<dbReference type="InterPro" id="IPR009008">
    <property type="entry name" value="Val/Leu/Ile-tRNA-synth_edit"/>
</dbReference>
<dbReference type="InterPro" id="IPR002303">
    <property type="entry name" value="Valyl-tRNA_ligase"/>
</dbReference>
<dbReference type="NCBIfam" id="NF004349">
    <property type="entry name" value="PRK05729.1"/>
    <property type="match status" value="1"/>
</dbReference>
<dbReference type="NCBIfam" id="TIGR00422">
    <property type="entry name" value="valS"/>
    <property type="match status" value="1"/>
</dbReference>
<dbReference type="PANTHER" id="PTHR11946:SF93">
    <property type="entry name" value="VALINE--TRNA LIGASE, CHLOROPLASTIC_MITOCHONDRIAL 2"/>
    <property type="match status" value="1"/>
</dbReference>
<dbReference type="PANTHER" id="PTHR11946">
    <property type="entry name" value="VALYL-TRNA SYNTHETASES"/>
    <property type="match status" value="1"/>
</dbReference>
<dbReference type="Pfam" id="PF08264">
    <property type="entry name" value="Anticodon_1"/>
    <property type="match status" value="1"/>
</dbReference>
<dbReference type="Pfam" id="PF00133">
    <property type="entry name" value="tRNA-synt_1"/>
    <property type="match status" value="1"/>
</dbReference>
<dbReference type="Pfam" id="PF10458">
    <property type="entry name" value="Val_tRNA-synt_C"/>
    <property type="match status" value="1"/>
</dbReference>
<dbReference type="PRINTS" id="PR00986">
    <property type="entry name" value="TRNASYNTHVAL"/>
</dbReference>
<dbReference type="SUPFAM" id="SSF47323">
    <property type="entry name" value="Anticodon-binding domain of a subclass of class I aminoacyl-tRNA synthetases"/>
    <property type="match status" value="1"/>
</dbReference>
<dbReference type="SUPFAM" id="SSF52374">
    <property type="entry name" value="Nucleotidylyl transferase"/>
    <property type="match status" value="1"/>
</dbReference>
<dbReference type="SUPFAM" id="SSF46589">
    <property type="entry name" value="tRNA-binding arm"/>
    <property type="match status" value="1"/>
</dbReference>
<dbReference type="SUPFAM" id="SSF50677">
    <property type="entry name" value="ValRS/IleRS/LeuRS editing domain"/>
    <property type="match status" value="1"/>
</dbReference>
<dbReference type="PROSITE" id="PS00178">
    <property type="entry name" value="AA_TRNA_LIGASE_I"/>
    <property type="match status" value="1"/>
</dbReference>
<organism>
    <name type="scientific">Acinetobacter baylyi (strain ATCC 33305 / BD413 / ADP1)</name>
    <dbReference type="NCBI Taxonomy" id="62977"/>
    <lineage>
        <taxon>Bacteria</taxon>
        <taxon>Pseudomonadati</taxon>
        <taxon>Pseudomonadota</taxon>
        <taxon>Gammaproteobacteria</taxon>
        <taxon>Moraxellales</taxon>
        <taxon>Moraxellaceae</taxon>
        <taxon>Acinetobacter</taxon>
    </lineage>
</organism>
<evidence type="ECO:0000255" key="1">
    <source>
        <dbReference type="HAMAP-Rule" id="MF_02004"/>
    </source>
</evidence>
<accession>Q6F8F0</accession>
<gene>
    <name evidence="1" type="primary">valS</name>
    <name type="ordered locus">ACIAD2950</name>
</gene>
<keyword id="KW-0030">Aminoacyl-tRNA synthetase</keyword>
<keyword id="KW-0067">ATP-binding</keyword>
<keyword id="KW-0175">Coiled coil</keyword>
<keyword id="KW-0963">Cytoplasm</keyword>
<keyword id="KW-0436">Ligase</keyword>
<keyword id="KW-0547">Nucleotide-binding</keyword>
<keyword id="KW-0648">Protein biosynthesis</keyword>
<feature type="chain" id="PRO_0000224426" description="Valine--tRNA ligase">
    <location>
        <begin position="1"/>
        <end position="971"/>
    </location>
</feature>
<feature type="coiled-coil region" evidence="1">
    <location>
        <begin position="906"/>
        <end position="933"/>
    </location>
</feature>
<feature type="short sequence motif" description="'HIGH' region">
    <location>
        <begin position="55"/>
        <end position="65"/>
    </location>
</feature>
<feature type="short sequence motif" description="'KMSKS' region">
    <location>
        <begin position="572"/>
        <end position="576"/>
    </location>
</feature>
<feature type="binding site" evidence="1">
    <location>
        <position position="575"/>
    </location>
    <ligand>
        <name>ATP</name>
        <dbReference type="ChEBI" id="CHEBI:30616"/>
    </ligand>
</feature>